<dbReference type="EMBL" id="CP000308">
    <property type="protein sequence ID" value="ABG12549.1"/>
    <property type="molecule type" value="Genomic_DNA"/>
</dbReference>
<dbReference type="RefSeq" id="WP_002210716.1">
    <property type="nucleotide sequence ID" value="NZ_CP009906.1"/>
</dbReference>
<dbReference type="SMR" id="Q1CAH3"/>
<dbReference type="KEGG" id="ypa:YPA_0581"/>
<dbReference type="Proteomes" id="UP000001971">
    <property type="component" value="Chromosome"/>
</dbReference>
<dbReference type="Gene3D" id="3.10.20.280">
    <property type="entry name" value="RnfH-like"/>
    <property type="match status" value="1"/>
</dbReference>
<dbReference type="HAMAP" id="MF_00460">
    <property type="entry name" value="UPF0125_RnfH"/>
    <property type="match status" value="1"/>
</dbReference>
<dbReference type="InterPro" id="IPR016155">
    <property type="entry name" value="Mopterin_synth/thiamin_S_b"/>
</dbReference>
<dbReference type="InterPro" id="IPR005346">
    <property type="entry name" value="RnfH"/>
</dbReference>
<dbReference type="InterPro" id="IPR037021">
    <property type="entry name" value="RnfH_sf"/>
</dbReference>
<dbReference type="NCBIfam" id="NF002490">
    <property type="entry name" value="PRK01777.1"/>
    <property type="match status" value="1"/>
</dbReference>
<dbReference type="PANTHER" id="PTHR37483">
    <property type="entry name" value="UPF0125 PROTEIN RATB"/>
    <property type="match status" value="1"/>
</dbReference>
<dbReference type="PANTHER" id="PTHR37483:SF1">
    <property type="entry name" value="UPF0125 PROTEIN RATB"/>
    <property type="match status" value="1"/>
</dbReference>
<dbReference type="Pfam" id="PF03658">
    <property type="entry name" value="Ub-RnfH"/>
    <property type="match status" value="1"/>
</dbReference>
<dbReference type="SUPFAM" id="SSF54285">
    <property type="entry name" value="MoaD/ThiS"/>
    <property type="match status" value="1"/>
</dbReference>
<proteinExistence type="inferred from homology"/>
<accession>Q1CAH3</accession>
<protein>
    <recommendedName>
        <fullName evidence="1">Protein RnfH</fullName>
    </recommendedName>
</protein>
<reference key="1">
    <citation type="journal article" date="2006" name="J. Bacteriol.">
        <title>Complete genome sequence of Yersinia pestis strains Antiqua and Nepal516: evidence of gene reduction in an emerging pathogen.</title>
        <authorList>
            <person name="Chain P.S.G."/>
            <person name="Hu P."/>
            <person name="Malfatti S.A."/>
            <person name="Radnedge L."/>
            <person name="Larimer F."/>
            <person name="Vergez L.M."/>
            <person name="Worsham P."/>
            <person name="Chu M.C."/>
            <person name="Andersen G.L."/>
        </authorList>
    </citation>
    <scope>NUCLEOTIDE SEQUENCE [LARGE SCALE GENOMIC DNA]</scope>
    <source>
        <strain>Antiqua</strain>
    </source>
</reference>
<sequence>MPDIRVEVVYALSERQYLRTVSLVVGSTVEDAIKASGLLELRPDIDLEKNKVGIYSRPVKLGDKLNDGDRVEIYRPLIADPKELRRQRAEQAKK</sequence>
<evidence type="ECO:0000255" key="1">
    <source>
        <dbReference type="HAMAP-Rule" id="MF_00460"/>
    </source>
</evidence>
<gene>
    <name evidence="1" type="primary">rnfH</name>
    <name type="ordered locus">YPA_0581</name>
</gene>
<comment type="similarity">
    <text evidence="1">Belongs to the UPF0125 (RnfH) family.</text>
</comment>
<name>RNFH_YERPA</name>
<feature type="chain" id="PRO_1000013597" description="Protein RnfH">
    <location>
        <begin position="1"/>
        <end position="94"/>
    </location>
</feature>
<organism>
    <name type="scientific">Yersinia pestis bv. Antiqua (strain Antiqua)</name>
    <dbReference type="NCBI Taxonomy" id="360102"/>
    <lineage>
        <taxon>Bacteria</taxon>
        <taxon>Pseudomonadati</taxon>
        <taxon>Pseudomonadota</taxon>
        <taxon>Gammaproteobacteria</taxon>
        <taxon>Enterobacterales</taxon>
        <taxon>Yersiniaceae</taxon>
        <taxon>Yersinia</taxon>
    </lineage>
</organism>